<protein>
    <recommendedName>
        <fullName evidence="1">Trigger factor</fullName>
        <shortName evidence="1">TF</shortName>
        <ecNumber evidence="1">5.2.1.8</ecNumber>
    </recommendedName>
    <alternativeName>
        <fullName evidence="1">PPIase</fullName>
    </alternativeName>
</protein>
<dbReference type="EC" id="5.2.1.8" evidence="1"/>
<dbReference type="EMBL" id="AE017196">
    <property type="protein sequence ID" value="AAS14054.1"/>
    <property type="molecule type" value="Genomic_DNA"/>
</dbReference>
<dbReference type="RefSeq" id="WP_010962514.1">
    <property type="nucleotide sequence ID" value="NZ_OX384529.1"/>
</dbReference>
<dbReference type="SMR" id="Q73I58"/>
<dbReference type="EnsemblBacteria" id="AAS14054">
    <property type="protein sequence ID" value="AAS14054"/>
    <property type="gene ID" value="WD_0320"/>
</dbReference>
<dbReference type="GeneID" id="70035810"/>
<dbReference type="KEGG" id="wol:WD_0320"/>
<dbReference type="eggNOG" id="COG0544">
    <property type="taxonomic scope" value="Bacteria"/>
</dbReference>
<dbReference type="Proteomes" id="UP000008215">
    <property type="component" value="Chromosome"/>
</dbReference>
<dbReference type="GO" id="GO:0005737">
    <property type="term" value="C:cytoplasm"/>
    <property type="evidence" value="ECO:0007669"/>
    <property type="project" value="UniProtKB-SubCell"/>
</dbReference>
<dbReference type="GO" id="GO:0003755">
    <property type="term" value="F:peptidyl-prolyl cis-trans isomerase activity"/>
    <property type="evidence" value="ECO:0007669"/>
    <property type="project" value="UniProtKB-UniRule"/>
</dbReference>
<dbReference type="GO" id="GO:0051301">
    <property type="term" value="P:cell division"/>
    <property type="evidence" value="ECO:0007669"/>
    <property type="project" value="UniProtKB-KW"/>
</dbReference>
<dbReference type="GO" id="GO:0006457">
    <property type="term" value="P:protein folding"/>
    <property type="evidence" value="ECO:0007669"/>
    <property type="project" value="UniProtKB-UniRule"/>
</dbReference>
<dbReference type="GO" id="GO:0015031">
    <property type="term" value="P:protein transport"/>
    <property type="evidence" value="ECO:0007669"/>
    <property type="project" value="UniProtKB-UniRule"/>
</dbReference>
<dbReference type="FunFam" id="3.10.50.40:FF:000001">
    <property type="entry name" value="Trigger factor"/>
    <property type="match status" value="1"/>
</dbReference>
<dbReference type="Gene3D" id="3.10.50.40">
    <property type="match status" value="1"/>
</dbReference>
<dbReference type="Gene3D" id="3.30.70.1050">
    <property type="entry name" value="Trigger factor ribosome-binding domain"/>
    <property type="match status" value="1"/>
</dbReference>
<dbReference type="Gene3D" id="1.10.3120.10">
    <property type="entry name" value="Trigger factor, C-terminal domain"/>
    <property type="match status" value="1"/>
</dbReference>
<dbReference type="HAMAP" id="MF_00303">
    <property type="entry name" value="Trigger_factor_Tig"/>
    <property type="match status" value="1"/>
</dbReference>
<dbReference type="InterPro" id="IPR046357">
    <property type="entry name" value="PPIase_dom_sf"/>
</dbReference>
<dbReference type="InterPro" id="IPR001179">
    <property type="entry name" value="PPIase_FKBP_dom"/>
</dbReference>
<dbReference type="InterPro" id="IPR005215">
    <property type="entry name" value="Trig_fac"/>
</dbReference>
<dbReference type="InterPro" id="IPR008880">
    <property type="entry name" value="Trigger_fac_C"/>
</dbReference>
<dbReference type="InterPro" id="IPR037041">
    <property type="entry name" value="Trigger_fac_C_sf"/>
</dbReference>
<dbReference type="InterPro" id="IPR008881">
    <property type="entry name" value="Trigger_fac_ribosome-bd_bac"/>
</dbReference>
<dbReference type="InterPro" id="IPR036611">
    <property type="entry name" value="Trigger_fac_ribosome-bd_sf"/>
</dbReference>
<dbReference type="InterPro" id="IPR027304">
    <property type="entry name" value="Trigger_fact/SurA_dom_sf"/>
</dbReference>
<dbReference type="NCBIfam" id="TIGR00115">
    <property type="entry name" value="tig"/>
    <property type="match status" value="1"/>
</dbReference>
<dbReference type="Pfam" id="PF00254">
    <property type="entry name" value="FKBP_C"/>
    <property type="match status" value="1"/>
</dbReference>
<dbReference type="Pfam" id="PF05698">
    <property type="entry name" value="Trigger_C"/>
    <property type="match status" value="1"/>
</dbReference>
<dbReference type="Pfam" id="PF05697">
    <property type="entry name" value="Trigger_N"/>
    <property type="match status" value="1"/>
</dbReference>
<dbReference type="PIRSF" id="PIRSF003095">
    <property type="entry name" value="Trigger_factor"/>
    <property type="match status" value="1"/>
</dbReference>
<dbReference type="SUPFAM" id="SSF54534">
    <property type="entry name" value="FKBP-like"/>
    <property type="match status" value="1"/>
</dbReference>
<dbReference type="SUPFAM" id="SSF109998">
    <property type="entry name" value="Triger factor/SurA peptide-binding domain-like"/>
    <property type="match status" value="1"/>
</dbReference>
<dbReference type="SUPFAM" id="SSF102735">
    <property type="entry name" value="Trigger factor ribosome-binding domain"/>
    <property type="match status" value="1"/>
</dbReference>
<dbReference type="PROSITE" id="PS50059">
    <property type="entry name" value="FKBP_PPIASE"/>
    <property type="match status" value="1"/>
</dbReference>
<accession>Q73I58</accession>
<gene>
    <name evidence="1" type="primary">tig</name>
    <name type="ordered locus">WD_0320</name>
</gene>
<feature type="chain" id="PRO_0000179462" description="Trigger factor">
    <location>
        <begin position="1"/>
        <end position="444"/>
    </location>
</feature>
<feature type="domain" description="PPIase FKBP-type" evidence="1">
    <location>
        <begin position="185"/>
        <end position="270"/>
    </location>
</feature>
<comment type="function">
    <text evidence="1">Involved in protein export. Acts as a chaperone by maintaining the newly synthesized protein in an open conformation. Functions as a peptidyl-prolyl cis-trans isomerase.</text>
</comment>
<comment type="catalytic activity">
    <reaction evidence="1">
        <text>[protein]-peptidylproline (omega=180) = [protein]-peptidylproline (omega=0)</text>
        <dbReference type="Rhea" id="RHEA:16237"/>
        <dbReference type="Rhea" id="RHEA-COMP:10747"/>
        <dbReference type="Rhea" id="RHEA-COMP:10748"/>
        <dbReference type="ChEBI" id="CHEBI:83833"/>
        <dbReference type="ChEBI" id="CHEBI:83834"/>
        <dbReference type="EC" id="5.2.1.8"/>
    </reaction>
</comment>
<comment type="subcellular location">
    <subcellularLocation>
        <location>Cytoplasm</location>
    </subcellularLocation>
    <text evidence="1">About half TF is bound to the ribosome near the polypeptide exit tunnel while the other half is free in the cytoplasm.</text>
</comment>
<comment type="domain">
    <text evidence="1">Consists of 3 domains; the N-terminus binds the ribosome, the middle domain has PPIase activity, while the C-terminus has intrinsic chaperone activity on its own.</text>
</comment>
<comment type="similarity">
    <text evidence="1">Belongs to the FKBP-type PPIase family. Tig subfamily.</text>
</comment>
<name>TIG_WOLPM</name>
<reference key="1">
    <citation type="journal article" date="2004" name="PLoS Biol.">
        <title>Phylogenomics of the reproductive parasite Wolbachia pipientis wMel: a streamlined genome overrun by mobile genetic elements.</title>
        <authorList>
            <person name="Wu M."/>
            <person name="Sun L.V."/>
            <person name="Vamathevan J.J."/>
            <person name="Riegler M."/>
            <person name="DeBoy R.T."/>
            <person name="Brownlie J.C."/>
            <person name="McGraw E.A."/>
            <person name="Martin W."/>
            <person name="Esser C."/>
            <person name="Ahmadinejad N."/>
            <person name="Wiegand C."/>
            <person name="Madupu R."/>
            <person name="Beanan M.J."/>
            <person name="Brinkac L.M."/>
            <person name="Daugherty S.C."/>
            <person name="Durkin A.S."/>
            <person name="Kolonay J.F."/>
            <person name="Nelson W.C."/>
            <person name="Mohamoud Y."/>
            <person name="Lee P."/>
            <person name="Berry K.J."/>
            <person name="Young M.B."/>
            <person name="Utterback T.R."/>
            <person name="Weidman J.F."/>
            <person name="Nierman W.C."/>
            <person name="Paulsen I.T."/>
            <person name="Nelson K.E."/>
            <person name="Tettelin H."/>
            <person name="O'Neill S.L."/>
            <person name="Eisen J.A."/>
        </authorList>
    </citation>
    <scope>NUCLEOTIDE SEQUENCE [LARGE SCALE GENOMIC DNA]</scope>
</reference>
<proteinExistence type="inferred from homology"/>
<evidence type="ECO:0000255" key="1">
    <source>
        <dbReference type="HAMAP-Rule" id="MF_00303"/>
    </source>
</evidence>
<sequence length="444" mass="50992">MSNNIPQNTVEVSSVYTYKELSIDKLKYEYEITVGSDYIKQKVNSRLQEIAENAKSPGFRAGKMPYDLVVANYKNEALEYVINNTIDYCSSDLMKKIEVKSHIYPKVDVISLPDLGKENEEGNFVYKLSFESMPEVPVIDLDKINLKKIEAKIEEEDIKEFIDSIKTKFPNFASVDDASYQAKDGDKLIIDFEGRIRNKLFQGGSSKNFAVNLGSGTFINGFEDQLTGMKKGETKNFKLKFPENYQAISLAGQEADFSVRVNEIQIAKDFENDDEIAKSIGFKDYSLLINHAKKMIGDQCTEMRNLLIKKELFDYLDANYSFDLPTDIVKQEQQRMEGELGAQNDSRKEAEKRVKLAMLFMKFSAEHKISLTQNDVLSVIVNQYVSKDVQFDRVLKHFESNKQFQELVRGQALEYKVTDYIIEKVSKEEQIVSVKELKELFDNI</sequence>
<keyword id="KW-0131">Cell cycle</keyword>
<keyword id="KW-0132">Cell division</keyword>
<keyword id="KW-0143">Chaperone</keyword>
<keyword id="KW-0963">Cytoplasm</keyword>
<keyword id="KW-0413">Isomerase</keyword>
<keyword id="KW-0697">Rotamase</keyword>
<organism>
    <name type="scientific">Wolbachia pipientis wMel</name>
    <dbReference type="NCBI Taxonomy" id="163164"/>
    <lineage>
        <taxon>Bacteria</taxon>
        <taxon>Pseudomonadati</taxon>
        <taxon>Pseudomonadota</taxon>
        <taxon>Alphaproteobacteria</taxon>
        <taxon>Rickettsiales</taxon>
        <taxon>Anaplasmataceae</taxon>
        <taxon>Wolbachieae</taxon>
        <taxon>Wolbachia</taxon>
    </lineage>
</organism>